<sequence>MLMLLVRGTHFENNWSKLIPPAPLDATVSEPPVPDSGEPDSGVPWRRSDEALRVNVGGVRRRLSARALARFPGTRLGRLQAAKSEEQARRLCDDYDAAAREFYFDRHPGFFLSLLHFYRTGRLHVLDELCVFAFGQEADYWGLGENALAACCRARYLERRVARPRAWDEDSDTPSSVDPNPDEISDVQRELARYGAARCGRLRRRLWLTMENPGYSLPSKLFSCVSIGVVLASIAAMCIHSLPEYQAREAAAAVATVAAGRSAEDVRDDPVLRRLEYFCIAWFSFEVSSRLLLAPSTRNFFCHPLNLIDIVSVLPFYLTLLASVALGGNNHGGTSGEELGHLGKVVQVFRLMRIFRVLKLARHSTGLRSLGATLKHSYREVGILLLYLAVGVSVFSGVAYTAEKEEDVGFDTIPACWWWGTVSMTTVGYGDVVPVTLAGKLAASGCILGGILVVALPITIIFNKFSHFYQRQKALEAAVRNSGHREFEDLLSSVDGVSDASLETSRETSQEGRSADLEAPSESPKPQIY</sequence>
<name>KCNS1_LEMCA</name>
<evidence type="ECO:0000250" key="1">
    <source>
        <dbReference type="UniProtKB" id="O35173"/>
    </source>
</evidence>
<evidence type="ECO:0000250" key="2">
    <source>
        <dbReference type="UniProtKB" id="P63142"/>
    </source>
</evidence>
<evidence type="ECO:0000250" key="3">
    <source>
        <dbReference type="UniProtKB" id="Q96KK3"/>
    </source>
</evidence>
<evidence type="ECO:0000256" key="4">
    <source>
        <dbReference type="SAM" id="MobiDB-lite"/>
    </source>
</evidence>
<evidence type="ECO:0000305" key="5"/>
<keyword id="KW-1003">Cell membrane</keyword>
<keyword id="KW-0407">Ion channel</keyword>
<keyword id="KW-0406">Ion transport</keyword>
<keyword id="KW-0472">Membrane</keyword>
<keyword id="KW-0630">Potassium</keyword>
<keyword id="KW-0631">Potassium channel</keyword>
<keyword id="KW-0633">Potassium transport</keyword>
<keyword id="KW-0812">Transmembrane</keyword>
<keyword id="KW-1133">Transmembrane helix</keyword>
<keyword id="KW-0813">Transport</keyword>
<keyword id="KW-0851">Voltage-gated channel</keyword>
<protein>
    <recommendedName>
        <fullName evidence="3">Delayed-rectifier potassium channel regulatory subunit KCNS1</fullName>
    </recommendedName>
    <alternativeName>
        <fullName>Delayed-rectifier K(+) channel alpha subunit 1</fullName>
    </alternativeName>
    <alternativeName>
        <fullName evidence="3">Delayed-rectifier potassium channel subunit Kv9.1</fullName>
    </alternativeName>
</protein>
<comment type="function">
    <text evidence="1 3">Potassium channel regulatory subunit that modulate the delayed rectifier voltage-gated potassium channel activity of KCNB1 and KCNB2 by altering their kinetics, expression levels, and shifting the half-inactivation potential to more polarized values. While it does not form functional channels on its own, it can form functional heterotetrameric channels with KCNB1 and KCNB2 (By similarity). Each regulatory subunit has unique regulatory properties that can lead to extensive inhibition, significant changes in kinetics, and/or substantial shifts in the voltage dependencies of the inactivation process (By similarity).</text>
</comment>
<comment type="subunit">
    <text evidence="1 3">Heterotetramer with KCNB1 (By similarity). Heterotetramer with KCNB2 (By similarity). Does not form homomultimers (By similarity).</text>
</comment>
<comment type="subcellular location">
    <subcellularLocation>
        <location evidence="3">Cell membrane</location>
        <topology evidence="3">Multi-pass membrane protein</topology>
    </subcellularLocation>
    <text evidence="3">May not reach the plasma membrane but remain in an intracellular compartment in the absence of KCNB1 or KCNB2.</text>
</comment>
<comment type="domain">
    <text evidence="2">The transmembrane segment S4 functions as a voltage-sensor and is characterized by a series of positively charged amino acids at every third position. Channel opening and closing is effected by a conformation change that affects the position and orientation of the voltage-sensor paddle formed by S3 and S4 within the membrane. A transmembrane electric field that is positive inside would push the positively charged S4 segment outwards, thereby opening the pore, while a field that is negative inside would pull the S4 segment inwards and close the pore. Changes in the position and orientation of S4 are then transmitted to the activation gate formed by the inner helix bundle via the S4-S5 linker region.</text>
</comment>
<comment type="similarity">
    <text evidence="5">Belongs to the potassium channel family. S (TC 1.A.1.2) subfamily. Kv9.1/KCNS1 sub-subfamily.</text>
</comment>
<reference key="1">
    <citation type="journal article" date="2007" name="Genome Res.">
        <title>Comparative sequence analyses reveal rapid and divergent evolutionary changes of the WFDC locus in the primate lineage.</title>
        <authorList>
            <consortium name="NISC comparative sequencing program"/>
            <person name="Hurle B."/>
            <person name="Swanson W."/>
            <person name="Green E.D."/>
        </authorList>
    </citation>
    <scope>NUCLEOTIDE SEQUENCE [GENOMIC DNA]</scope>
</reference>
<gene>
    <name evidence="3" type="primary">KCNS1</name>
</gene>
<dbReference type="EMBL" id="DP000042">
    <property type="protein sequence ID" value="ABO52957.1"/>
    <property type="molecule type" value="Genomic_DNA"/>
</dbReference>
<dbReference type="SMR" id="A4K2S2"/>
<dbReference type="GO" id="GO:0048471">
    <property type="term" value="C:perinuclear region of cytoplasm"/>
    <property type="evidence" value="ECO:0000250"/>
    <property type="project" value="UniProtKB"/>
</dbReference>
<dbReference type="GO" id="GO:0005886">
    <property type="term" value="C:plasma membrane"/>
    <property type="evidence" value="ECO:0000250"/>
    <property type="project" value="UniProtKB"/>
</dbReference>
<dbReference type="GO" id="GO:0008076">
    <property type="term" value="C:voltage-gated potassium channel complex"/>
    <property type="evidence" value="ECO:0000250"/>
    <property type="project" value="UniProtKB"/>
</dbReference>
<dbReference type="GO" id="GO:0005251">
    <property type="term" value="F:delayed rectifier potassium channel activity"/>
    <property type="evidence" value="ECO:0007669"/>
    <property type="project" value="TreeGrafter"/>
</dbReference>
<dbReference type="GO" id="GO:0015459">
    <property type="term" value="F:potassium channel regulator activity"/>
    <property type="evidence" value="ECO:0000250"/>
    <property type="project" value="UniProtKB"/>
</dbReference>
<dbReference type="GO" id="GO:0001508">
    <property type="term" value="P:action potential"/>
    <property type="evidence" value="ECO:0007669"/>
    <property type="project" value="TreeGrafter"/>
</dbReference>
<dbReference type="GO" id="GO:0006813">
    <property type="term" value="P:potassium ion transport"/>
    <property type="evidence" value="ECO:0000250"/>
    <property type="project" value="UniProtKB"/>
</dbReference>
<dbReference type="GO" id="GO:0051260">
    <property type="term" value="P:protein homooligomerization"/>
    <property type="evidence" value="ECO:0007669"/>
    <property type="project" value="InterPro"/>
</dbReference>
<dbReference type="GO" id="GO:1901379">
    <property type="term" value="P:regulation of potassium ion transmembrane transport"/>
    <property type="evidence" value="ECO:0000250"/>
    <property type="project" value="UniProtKB"/>
</dbReference>
<dbReference type="FunFam" id="1.10.287.70:FF:000005">
    <property type="entry name" value="potassium voltage-gated channel subfamily G member 1"/>
    <property type="match status" value="1"/>
</dbReference>
<dbReference type="FunFam" id="3.30.710.10:FF:000102">
    <property type="entry name" value="Potassium voltage-gated channel subfamily S member 1"/>
    <property type="match status" value="1"/>
</dbReference>
<dbReference type="FunFam" id="1.20.120.350:FF:000029">
    <property type="entry name" value="Potassium voltage-gated channel subfamily S member 2"/>
    <property type="match status" value="1"/>
</dbReference>
<dbReference type="Gene3D" id="1.10.287.70">
    <property type="match status" value="1"/>
</dbReference>
<dbReference type="Gene3D" id="3.30.710.10">
    <property type="entry name" value="Potassium Channel Kv1.1, Chain A"/>
    <property type="match status" value="1"/>
</dbReference>
<dbReference type="Gene3D" id="1.20.120.350">
    <property type="entry name" value="Voltage-gated potassium channels. Chain C"/>
    <property type="match status" value="1"/>
</dbReference>
<dbReference type="InterPro" id="IPR000210">
    <property type="entry name" value="BTB/POZ_dom"/>
</dbReference>
<dbReference type="InterPro" id="IPR005821">
    <property type="entry name" value="Ion_trans_dom"/>
</dbReference>
<dbReference type="InterPro" id="IPR003968">
    <property type="entry name" value="K_chnl_volt-dep_Kv"/>
</dbReference>
<dbReference type="InterPro" id="IPR003971">
    <property type="entry name" value="K_chnl_volt-dep_Kv5/Kv9"/>
</dbReference>
<dbReference type="InterPro" id="IPR011333">
    <property type="entry name" value="SKP1/BTB/POZ_sf"/>
</dbReference>
<dbReference type="InterPro" id="IPR003131">
    <property type="entry name" value="T1-type_BTB"/>
</dbReference>
<dbReference type="InterPro" id="IPR028325">
    <property type="entry name" value="VG_K_chnl"/>
</dbReference>
<dbReference type="InterPro" id="IPR027359">
    <property type="entry name" value="Volt_channel_dom_sf"/>
</dbReference>
<dbReference type="PANTHER" id="PTHR11537:SF61">
    <property type="entry name" value="POTASSIUM VOLTAGE-GATED CHANNEL SUBFAMILY S MEMBER 1"/>
    <property type="match status" value="1"/>
</dbReference>
<dbReference type="PANTHER" id="PTHR11537">
    <property type="entry name" value="VOLTAGE-GATED POTASSIUM CHANNEL"/>
    <property type="match status" value="1"/>
</dbReference>
<dbReference type="Pfam" id="PF02214">
    <property type="entry name" value="BTB_2"/>
    <property type="match status" value="1"/>
</dbReference>
<dbReference type="Pfam" id="PF00520">
    <property type="entry name" value="Ion_trans"/>
    <property type="match status" value="1"/>
</dbReference>
<dbReference type="PRINTS" id="PR00169">
    <property type="entry name" value="KCHANNEL"/>
</dbReference>
<dbReference type="PRINTS" id="PR01494">
    <property type="entry name" value="KV9CHANNEL"/>
</dbReference>
<dbReference type="PRINTS" id="PR01491">
    <property type="entry name" value="KVCHANNEL"/>
</dbReference>
<dbReference type="SMART" id="SM00225">
    <property type="entry name" value="BTB"/>
    <property type="match status" value="1"/>
</dbReference>
<dbReference type="SUPFAM" id="SSF54695">
    <property type="entry name" value="POZ domain"/>
    <property type="match status" value="1"/>
</dbReference>
<dbReference type="SUPFAM" id="SSF81324">
    <property type="entry name" value="Voltage-gated potassium channels"/>
    <property type="match status" value="1"/>
</dbReference>
<organism>
    <name type="scientific">Lemur catta</name>
    <name type="common">Ring-tailed lemur</name>
    <dbReference type="NCBI Taxonomy" id="9447"/>
    <lineage>
        <taxon>Eukaryota</taxon>
        <taxon>Metazoa</taxon>
        <taxon>Chordata</taxon>
        <taxon>Craniata</taxon>
        <taxon>Vertebrata</taxon>
        <taxon>Euteleostomi</taxon>
        <taxon>Mammalia</taxon>
        <taxon>Eutheria</taxon>
        <taxon>Euarchontoglires</taxon>
        <taxon>Primates</taxon>
        <taxon>Strepsirrhini</taxon>
        <taxon>Lemuriformes</taxon>
        <taxon>Lemuridae</taxon>
        <taxon>Lemur</taxon>
    </lineage>
</organism>
<feature type="chain" id="PRO_0000289617" description="Delayed-rectifier potassium channel regulatory subunit KCNS1">
    <location>
        <begin position="1"/>
        <end position="529"/>
    </location>
</feature>
<feature type="topological domain" description="Cytoplasmic" evidence="2">
    <location>
        <begin position="1"/>
        <end position="217"/>
    </location>
</feature>
<feature type="transmembrane region" description="Helical; Name=Segment S1" evidence="2">
    <location>
        <begin position="218"/>
        <end position="239"/>
    </location>
</feature>
<feature type="topological domain" description="Extracellular" evidence="2">
    <location>
        <begin position="240"/>
        <end position="270"/>
    </location>
</feature>
<feature type="transmembrane region" description="Helical; Name=Segment S2" evidence="2">
    <location>
        <begin position="271"/>
        <end position="293"/>
    </location>
</feature>
<feature type="topological domain" description="Cytoplasmic" evidence="2">
    <location>
        <begin position="294"/>
        <end position="304"/>
    </location>
</feature>
<feature type="transmembrane region" description="Helical; Name=Segment S3" evidence="2">
    <location>
        <begin position="305"/>
        <end position="322"/>
    </location>
</feature>
<feature type="topological domain" description="Extracellular" evidence="2">
    <location>
        <begin position="323"/>
        <end position="342"/>
    </location>
</feature>
<feature type="transmembrane region" description="Helical; Voltage-sensor; Name=Segment S4" evidence="2">
    <location>
        <begin position="343"/>
        <end position="363"/>
    </location>
</feature>
<feature type="topological domain" description="Cytoplasmic" evidence="2">
    <location>
        <begin position="364"/>
        <end position="378"/>
    </location>
</feature>
<feature type="transmembrane region" description="Helical; Name=Segment S5" evidence="2">
    <location>
        <begin position="379"/>
        <end position="400"/>
    </location>
</feature>
<feature type="topological domain" description="Extracellular" evidence="2">
    <location>
        <begin position="401"/>
        <end position="413"/>
    </location>
</feature>
<feature type="intramembrane region" description="Helical; Name=Pore helix" evidence="2">
    <location>
        <begin position="414"/>
        <end position="425"/>
    </location>
</feature>
<feature type="intramembrane region" evidence="2">
    <location>
        <begin position="426"/>
        <end position="433"/>
    </location>
</feature>
<feature type="topological domain" description="Extracellular" evidence="2">
    <location>
        <begin position="434"/>
        <end position="440"/>
    </location>
</feature>
<feature type="transmembrane region" description="Helical; Name=Segment S6" evidence="2">
    <location>
        <begin position="441"/>
        <end position="469"/>
    </location>
</feature>
<feature type="topological domain" description="Cytoplasmic" evidence="2">
    <location>
        <begin position="470"/>
        <end position="529"/>
    </location>
</feature>
<feature type="region of interest" description="Disordered" evidence="4">
    <location>
        <begin position="498"/>
        <end position="529"/>
    </location>
</feature>
<feature type="short sequence motif" description="Selectivity filter" evidence="2">
    <location>
        <begin position="426"/>
        <end position="431"/>
    </location>
</feature>
<feature type="compositionally biased region" description="Basic and acidic residues" evidence="4">
    <location>
        <begin position="504"/>
        <end position="516"/>
    </location>
</feature>
<accession>A4K2S2</accession>
<proteinExistence type="inferred from homology"/>